<dbReference type="EC" id="6.3.2.4" evidence="2"/>
<dbReference type="EMBL" id="CP001612">
    <property type="protein sequence ID" value="ACP53256.1"/>
    <property type="molecule type" value="Genomic_DNA"/>
</dbReference>
<dbReference type="RefSeq" id="WP_012719510.1">
    <property type="nucleotide sequence ID" value="NC_012633.1"/>
</dbReference>
<dbReference type="SMR" id="C3PMU6"/>
<dbReference type="KEGG" id="raf:RAF_ORF0310"/>
<dbReference type="HOGENOM" id="CLU_039268_1_1_5"/>
<dbReference type="UniPathway" id="UPA00219"/>
<dbReference type="Proteomes" id="UP000002305">
    <property type="component" value="Chromosome"/>
</dbReference>
<dbReference type="GO" id="GO:0005737">
    <property type="term" value="C:cytoplasm"/>
    <property type="evidence" value="ECO:0007669"/>
    <property type="project" value="UniProtKB-SubCell"/>
</dbReference>
<dbReference type="GO" id="GO:0005524">
    <property type="term" value="F:ATP binding"/>
    <property type="evidence" value="ECO:0007669"/>
    <property type="project" value="UniProtKB-KW"/>
</dbReference>
<dbReference type="GO" id="GO:0008716">
    <property type="term" value="F:D-alanine-D-alanine ligase activity"/>
    <property type="evidence" value="ECO:0007669"/>
    <property type="project" value="UniProtKB-UniRule"/>
</dbReference>
<dbReference type="GO" id="GO:0046872">
    <property type="term" value="F:metal ion binding"/>
    <property type="evidence" value="ECO:0007669"/>
    <property type="project" value="UniProtKB-KW"/>
</dbReference>
<dbReference type="GO" id="GO:0071555">
    <property type="term" value="P:cell wall organization"/>
    <property type="evidence" value="ECO:0007669"/>
    <property type="project" value="UniProtKB-KW"/>
</dbReference>
<dbReference type="GO" id="GO:0009252">
    <property type="term" value="P:peptidoglycan biosynthetic process"/>
    <property type="evidence" value="ECO:0007669"/>
    <property type="project" value="UniProtKB-UniRule"/>
</dbReference>
<dbReference type="GO" id="GO:0008360">
    <property type="term" value="P:regulation of cell shape"/>
    <property type="evidence" value="ECO:0007669"/>
    <property type="project" value="UniProtKB-KW"/>
</dbReference>
<dbReference type="Gene3D" id="3.40.50.20">
    <property type="match status" value="1"/>
</dbReference>
<dbReference type="Gene3D" id="3.30.1490.20">
    <property type="entry name" value="ATP-grasp fold, A domain"/>
    <property type="match status" value="1"/>
</dbReference>
<dbReference type="Gene3D" id="3.30.470.20">
    <property type="entry name" value="ATP-grasp fold, B domain"/>
    <property type="match status" value="1"/>
</dbReference>
<dbReference type="HAMAP" id="MF_00047">
    <property type="entry name" value="Dala_Dala_lig"/>
    <property type="match status" value="1"/>
</dbReference>
<dbReference type="InterPro" id="IPR011761">
    <property type="entry name" value="ATP-grasp"/>
</dbReference>
<dbReference type="InterPro" id="IPR013815">
    <property type="entry name" value="ATP_grasp_subdomain_1"/>
</dbReference>
<dbReference type="InterPro" id="IPR000291">
    <property type="entry name" value="D-Ala_lig_Van_CS"/>
</dbReference>
<dbReference type="InterPro" id="IPR005905">
    <property type="entry name" value="D_ala_D_ala"/>
</dbReference>
<dbReference type="InterPro" id="IPR011095">
    <property type="entry name" value="Dala_Dala_lig_C"/>
</dbReference>
<dbReference type="InterPro" id="IPR011127">
    <property type="entry name" value="Dala_Dala_lig_N"/>
</dbReference>
<dbReference type="InterPro" id="IPR016185">
    <property type="entry name" value="PreATP-grasp_dom_sf"/>
</dbReference>
<dbReference type="NCBIfam" id="TIGR01205">
    <property type="entry name" value="D_ala_D_alaTIGR"/>
    <property type="match status" value="1"/>
</dbReference>
<dbReference type="NCBIfam" id="NF002378">
    <property type="entry name" value="PRK01372.1"/>
    <property type="match status" value="1"/>
</dbReference>
<dbReference type="PANTHER" id="PTHR23132">
    <property type="entry name" value="D-ALANINE--D-ALANINE LIGASE"/>
    <property type="match status" value="1"/>
</dbReference>
<dbReference type="PANTHER" id="PTHR23132:SF23">
    <property type="entry name" value="D-ALANINE--D-ALANINE LIGASE B"/>
    <property type="match status" value="1"/>
</dbReference>
<dbReference type="Pfam" id="PF07478">
    <property type="entry name" value="Dala_Dala_lig_C"/>
    <property type="match status" value="1"/>
</dbReference>
<dbReference type="Pfam" id="PF01820">
    <property type="entry name" value="Dala_Dala_lig_N"/>
    <property type="match status" value="1"/>
</dbReference>
<dbReference type="PIRSF" id="PIRSF039102">
    <property type="entry name" value="Ddl/VanB"/>
    <property type="match status" value="1"/>
</dbReference>
<dbReference type="SUPFAM" id="SSF56059">
    <property type="entry name" value="Glutathione synthetase ATP-binding domain-like"/>
    <property type="match status" value="1"/>
</dbReference>
<dbReference type="SUPFAM" id="SSF52440">
    <property type="entry name" value="PreATP-grasp domain"/>
    <property type="match status" value="1"/>
</dbReference>
<dbReference type="PROSITE" id="PS50975">
    <property type="entry name" value="ATP_GRASP"/>
    <property type="match status" value="1"/>
</dbReference>
<dbReference type="PROSITE" id="PS00843">
    <property type="entry name" value="DALA_DALA_LIGASE_1"/>
    <property type="match status" value="1"/>
</dbReference>
<dbReference type="PROSITE" id="PS00844">
    <property type="entry name" value="DALA_DALA_LIGASE_2"/>
    <property type="match status" value="1"/>
</dbReference>
<comment type="function">
    <text evidence="2">Cell wall formation.</text>
</comment>
<comment type="catalytic activity">
    <reaction evidence="2">
        <text>2 D-alanine + ATP = D-alanyl-D-alanine + ADP + phosphate + H(+)</text>
        <dbReference type="Rhea" id="RHEA:11224"/>
        <dbReference type="ChEBI" id="CHEBI:15378"/>
        <dbReference type="ChEBI" id="CHEBI:30616"/>
        <dbReference type="ChEBI" id="CHEBI:43474"/>
        <dbReference type="ChEBI" id="CHEBI:57416"/>
        <dbReference type="ChEBI" id="CHEBI:57822"/>
        <dbReference type="ChEBI" id="CHEBI:456216"/>
        <dbReference type="EC" id="6.3.2.4"/>
    </reaction>
</comment>
<comment type="cofactor">
    <cofactor evidence="1">
        <name>Mg(2+)</name>
        <dbReference type="ChEBI" id="CHEBI:18420"/>
    </cofactor>
    <cofactor evidence="1">
        <name>Mn(2+)</name>
        <dbReference type="ChEBI" id="CHEBI:29035"/>
    </cofactor>
    <text evidence="1">Binds 2 magnesium or manganese ions per subunit.</text>
</comment>
<comment type="pathway">
    <text evidence="2">Cell wall biogenesis; peptidoglycan biosynthesis.</text>
</comment>
<comment type="subcellular location">
    <subcellularLocation>
        <location evidence="2">Cytoplasm</location>
    </subcellularLocation>
</comment>
<comment type="similarity">
    <text evidence="2">Belongs to the D-alanine--D-alanine ligase family.</text>
</comment>
<evidence type="ECO:0000250" key="1"/>
<evidence type="ECO:0000255" key="2">
    <source>
        <dbReference type="HAMAP-Rule" id="MF_00047"/>
    </source>
</evidence>
<gene>
    <name evidence="2" type="primary">ddl</name>
    <name type="ordered locus">RAF_ORF0310</name>
</gene>
<keyword id="KW-0067">ATP-binding</keyword>
<keyword id="KW-0133">Cell shape</keyword>
<keyword id="KW-0961">Cell wall biogenesis/degradation</keyword>
<keyword id="KW-0963">Cytoplasm</keyword>
<keyword id="KW-0436">Ligase</keyword>
<keyword id="KW-0460">Magnesium</keyword>
<keyword id="KW-0464">Manganese</keyword>
<keyword id="KW-0479">Metal-binding</keyword>
<keyword id="KW-0547">Nucleotide-binding</keyword>
<keyword id="KW-0573">Peptidoglycan synthesis</keyword>
<name>DDL_RICAE</name>
<accession>C3PMU6</accession>
<proteinExistence type="inferred from homology"/>
<protein>
    <recommendedName>
        <fullName evidence="2">D-alanine--D-alanine ligase</fullName>
        <ecNumber evidence="2">6.3.2.4</ecNumber>
    </recommendedName>
    <alternativeName>
        <fullName evidence="2">D-Ala-D-Ala ligase</fullName>
    </alternativeName>
    <alternativeName>
        <fullName evidence="2">D-alanylalanine synthetase</fullName>
    </alternativeName>
</protein>
<sequence>MHKYQTHWVEHSIVKILSSTGKKHIALMVGGMSAEREVSLVSSEGVSKALIELGYRVTFIDMGADIAVRLQEIKPDIVFNCLHGTYGEDGCLPGLLNIMRIPYTHSGMLSSALAFDKIHSRIWFLTNNINMAESIVVNKSDNIKNDPMKRPYVIKPLTQGSSIGVEVIFAEDDFNFADYDFPYGDQVIIEQYIKGRELQVAVLNGKALGALEIKLLKNRFYDYETKYTEGFADHLCPAPLPANLYEKLLIESEKIYKTMNCKGPARAEFILEEQTNKLYALEINTHPGMTPLSIVPEIAAYAGINFTNLIEEIIKMASFES</sequence>
<feature type="chain" id="PRO_1000202204" description="D-alanine--D-alanine ligase">
    <location>
        <begin position="1"/>
        <end position="321"/>
    </location>
</feature>
<feature type="domain" description="ATP-grasp" evidence="2">
    <location>
        <begin position="121"/>
        <end position="315"/>
    </location>
</feature>
<feature type="binding site" evidence="2">
    <location>
        <begin position="147"/>
        <end position="199"/>
    </location>
    <ligand>
        <name>ATP</name>
        <dbReference type="ChEBI" id="CHEBI:30616"/>
    </ligand>
</feature>
<feature type="binding site" evidence="2">
    <location>
        <position position="268"/>
    </location>
    <ligand>
        <name>Mg(2+)</name>
        <dbReference type="ChEBI" id="CHEBI:18420"/>
        <label>1</label>
    </ligand>
</feature>
<feature type="binding site" evidence="2">
    <location>
        <position position="282"/>
    </location>
    <ligand>
        <name>Mg(2+)</name>
        <dbReference type="ChEBI" id="CHEBI:18420"/>
        <label>1</label>
    </ligand>
</feature>
<feature type="binding site" evidence="2">
    <location>
        <position position="282"/>
    </location>
    <ligand>
        <name>Mg(2+)</name>
        <dbReference type="ChEBI" id="CHEBI:18420"/>
        <label>2</label>
    </ligand>
</feature>
<feature type="binding site" evidence="2">
    <location>
        <position position="284"/>
    </location>
    <ligand>
        <name>Mg(2+)</name>
        <dbReference type="ChEBI" id="CHEBI:18420"/>
        <label>2</label>
    </ligand>
</feature>
<organism>
    <name type="scientific">Rickettsia africae (strain ESF-5)</name>
    <dbReference type="NCBI Taxonomy" id="347255"/>
    <lineage>
        <taxon>Bacteria</taxon>
        <taxon>Pseudomonadati</taxon>
        <taxon>Pseudomonadota</taxon>
        <taxon>Alphaproteobacteria</taxon>
        <taxon>Rickettsiales</taxon>
        <taxon>Rickettsiaceae</taxon>
        <taxon>Rickettsieae</taxon>
        <taxon>Rickettsia</taxon>
        <taxon>spotted fever group</taxon>
    </lineage>
</organism>
<reference key="1">
    <citation type="journal article" date="2009" name="BMC Genomics">
        <title>Analysis of the Rickettsia africae genome reveals that virulence acquisition in Rickettsia species may be explained by genome reduction.</title>
        <authorList>
            <person name="Fournier P.-E."/>
            <person name="El Karkouri K."/>
            <person name="Leroy Q."/>
            <person name="Robert C."/>
            <person name="Giumelli B."/>
            <person name="Renesto P."/>
            <person name="Socolovschi C."/>
            <person name="Parola P."/>
            <person name="Audic S."/>
            <person name="Raoult D."/>
        </authorList>
    </citation>
    <scope>NUCLEOTIDE SEQUENCE [LARGE SCALE GENOMIC DNA]</scope>
    <source>
        <strain>ESF-5</strain>
    </source>
</reference>